<keyword id="KW-0240">DNA-directed RNA polymerase</keyword>
<keyword id="KW-0460">Magnesium</keyword>
<keyword id="KW-0479">Metal-binding</keyword>
<keyword id="KW-0548">Nucleotidyltransferase</keyword>
<keyword id="KW-0804">Transcription</keyword>
<keyword id="KW-0808">Transferase</keyword>
<keyword id="KW-0862">Zinc</keyword>
<name>RPOC_PAEAT</name>
<sequence>MSSESSFGLMQIGLATAEDIRGWSYGEVKKPETINYRTLKPEKDGLFCEKIFGPSRDWECYCGKYKRVRFKGIICERCGVEVTRAKVRRERMGHIELAAPVTHIWYFKGVPSRLGYLLDLAPKDLEKVIYFAAYMITSVDTESRHAELPNLQVEHDLEKKQMVDNRDSDIATIARDLEDELARLEGEGAKAADKKKARDSADRQMANVRKRADADIERLEQVWDRFKNLKVADLEGDEGLYRELRDRYGLYFEGSMGAEAIKKRLETFDMQAEAESLRDTIQNGKGQRKTRALKRLKVVNAFLTTNNSPLGMVLDAVPVIPPELRPMVQLDGGRFATSDLNDLYRRVINRNNRLKRLLDLGAPEIIVNNEKRMLQEAVDSLFDNGRRGRPVTGPGNRPLKSLSDMLKGKQGRFRQNLLGKRVDYSGRSVIVVGPQLKLHQCGLPKQMALELFKPFVMKRLVDLNHAQNIKSAKRMVERYRPQVWDVLEEIITEHPVLLNRAPTLHRLGIQAFEPQLVEGKAIQLHPLVCGAFNADFDGDQMAVHLPLSPEAQAEARILMLSSNNILKPSDGRPVTLPSQDMIIGLYHLTTKRVGSAGEGRIFSSVSEAIMAYDARDLHLNSQVKIRLDDFVPYAGWEAPEGWEPGQPALVETSLGQVIFNQTLPEDYPWVEAVADKGELSRIVNDLAERYPKVVTAATLDNLKDAGFYWATRSGVTVAISDIEVPTSKPAILAGYENMAAKIQGQYDKGLIDDDERRQELIEIWNKATNEIAQAMRDSLSPMNTINRMVSSGARGNWMQVRQIAGIRGLVANPKGEIIPRPIKSSYREGLSVLEYFIATHGARKGLADTALRTANSGYLTRRLVDVSQDVIVREEDCGTERGLVTPIAVPDSNGELVLDENVENSAYARTLAVDVVDAQGNVLAAGGTDCGDVVIDQLLAAGITEVKVRSVLTCESKVGTCALCYGRSLATGKTVDIGEAVGIIAAQSIGEPGTQLTMRTFHTGGAVSAGGGDDITQGLPRIQELFEARTPKGVAPIAEAAGRITIEESERQMRLVITPDDGSEEIAYPVLRRSRLLIEDGEHVSVGQKLINGPVDPKQVLRIMGPRAAQKFLVDEVQGVYRSQGIGIHDKHVEVIVRQMLRRVTVIESGDSDLLPGELAERARFEDENRRVVSEGKAPASGRPELMGITKASLATESWLSAASFQETTRVLTQAAMEGKSDPLLGLKENVIIGKLIPAGTGLPRYTEVTVEPTEEAKASLFTGPSAFTDFSYDALGGDGAPEFHAIPLDDYDLGNDFR</sequence>
<dbReference type="EC" id="2.7.7.6" evidence="1"/>
<dbReference type="EMBL" id="CP000474">
    <property type="protein sequence ID" value="ABM10268.1"/>
    <property type="molecule type" value="Genomic_DNA"/>
</dbReference>
<dbReference type="RefSeq" id="WP_011775600.1">
    <property type="nucleotide sequence ID" value="NC_008711.1"/>
</dbReference>
<dbReference type="SMR" id="A1R8V3"/>
<dbReference type="STRING" id="290340.AAur_2956"/>
<dbReference type="KEGG" id="aau:AAur_2956"/>
<dbReference type="eggNOG" id="COG0086">
    <property type="taxonomic scope" value="Bacteria"/>
</dbReference>
<dbReference type="HOGENOM" id="CLU_000524_3_1_11"/>
<dbReference type="OrthoDB" id="9815296at2"/>
<dbReference type="Proteomes" id="UP000000637">
    <property type="component" value="Chromosome"/>
</dbReference>
<dbReference type="GO" id="GO:0000428">
    <property type="term" value="C:DNA-directed RNA polymerase complex"/>
    <property type="evidence" value="ECO:0007669"/>
    <property type="project" value="UniProtKB-KW"/>
</dbReference>
<dbReference type="GO" id="GO:0003677">
    <property type="term" value="F:DNA binding"/>
    <property type="evidence" value="ECO:0007669"/>
    <property type="project" value="UniProtKB-UniRule"/>
</dbReference>
<dbReference type="GO" id="GO:0003899">
    <property type="term" value="F:DNA-directed RNA polymerase activity"/>
    <property type="evidence" value="ECO:0007669"/>
    <property type="project" value="UniProtKB-UniRule"/>
</dbReference>
<dbReference type="GO" id="GO:0000287">
    <property type="term" value="F:magnesium ion binding"/>
    <property type="evidence" value="ECO:0007669"/>
    <property type="project" value="UniProtKB-UniRule"/>
</dbReference>
<dbReference type="GO" id="GO:0008270">
    <property type="term" value="F:zinc ion binding"/>
    <property type="evidence" value="ECO:0007669"/>
    <property type="project" value="UniProtKB-UniRule"/>
</dbReference>
<dbReference type="GO" id="GO:0006351">
    <property type="term" value="P:DNA-templated transcription"/>
    <property type="evidence" value="ECO:0007669"/>
    <property type="project" value="UniProtKB-UniRule"/>
</dbReference>
<dbReference type="CDD" id="cd02655">
    <property type="entry name" value="RNAP_beta'_C"/>
    <property type="match status" value="1"/>
</dbReference>
<dbReference type="CDD" id="cd01609">
    <property type="entry name" value="RNAP_beta'_N"/>
    <property type="match status" value="1"/>
</dbReference>
<dbReference type="FunFam" id="1.10.150.390:FF:000002">
    <property type="entry name" value="DNA-directed RNA polymerase subunit beta"/>
    <property type="match status" value="1"/>
</dbReference>
<dbReference type="FunFam" id="1.10.40.90:FF:000001">
    <property type="entry name" value="DNA-directed RNA polymerase subunit beta"/>
    <property type="match status" value="1"/>
</dbReference>
<dbReference type="FunFam" id="4.10.860.120:FF:000001">
    <property type="entry name" value="DNA-directed RNA polymerase subunit beta"/>
    <property type="match status" value="1"/>
</dbReference>
<dbReference type="Gene3D" id="1.10.132.30">
    <property type="match status" value="1"/>
</dbReference>
<dbReference type="Gene3D" id="1.10.150.390">
    <property type="match status" value="1"/>
</dbReference>
<dbReference type="Gene3D" id="1.10.1790.20">
    <property type="match status" value="1"/>
</dbReference>
<dbReference type="Gene3D" id="1.10.40.90">
    <property type="match status" value="1"/>
</dbReference>
<dbReference type="Gene3D" id="2.40.40.20">
    <property type="match status" value="1"/>
</dbReference>
<dbReference type="Gene3D" id="2.40.50.100">
    <property type="match status" value="1"/>
</dbReference>
<dbReference type="Gene3D" id="4.10.860.120">
    <property type="entry name" value="RNA polymerase II, clamp domain"/>
    <property type="match status" value="1"/>
</dbReference>
<dbReference type="Gene3D" id="1.10.274.100">
    <property type="entry name" value="RNA polymerase Rpb1, domain 3"/>
    <property type="match status" value="2"/>
</dbReference>
<dbReference type="HAMAP" id="MF_01322">
    <property type="entry name" value="RNApol_bact_RpoC"/>
    <property type="match status" value="1"/>
</dbReference>
<dbReference type="InterPro" id="IPR045867">
    <property type="entry name" value="DNA-dir_RpoC_beta_prime"/>
</dbReference>
<dbReference type="InterPro" id="IPR012754">
    <property type="entry name" value="DNA-dir_RpoC_beta_prime_bact"/>
</dbReference>
<dbReference type="InterPro" id="IPR000722">
    <property type="entry name" value="RNA_pol_asu"/>
</dbReference>
<dbReference type="InterPro" id="IPR006592">
    <property type="entry name" value="RNA_pol_N"/>
</dbReference>
<dbReference type="InterPro" id="IPR007080">
    <property type="entry name" value="RNA_pol_Rpb1_1"/>
</dbReference>
<dbReference type="InterPro" id="IPR007066">
    <property type="entry name" value="RNA_pol_Rpb1_3"/>
</dbReference>
<dbReference type="InterPro" id="IPR042102">
    <property type="entry name" value="RNA_pol_Rpb1_3_sf"/>
</dbReference>
<dbReference type="InterPro" id="IPR007083">
    <property type="entry name" value="RNA_pol_Rpb1_4"/>
</dbReference>
<dbReference type="InterPro" id="IPR007081">
    <property type="entry name" value="RNA_pol_Rpb1_5"/>
</dbReference>
<dbReference type="InterPro" id="IPR044893">
    <property type="entry name" value="RNA_pol_Rpb1_clamp_domain"/>
</dbReference>
<dbReference type="InterPro" id="IPR038120">
    <property type="entry name" value="Rpb1_funnel_sf"/>
</dbReference>
<dbReference type="NCBIfam" id="NF011498">
    <property type="entry name" value="PRK14906.1"/>
    <property type="match status" value="1"/>
</dbReference>
<dbReference type="NCBIfam" id="TIGR02386">
    <property type="entry name" value="rpoC_TIGR"/>
    <property type="match status" value="1"/>
</dbReference>
<dbReference type="PANTHER" id="PTHR19376">
    <property type="entry name" value="DNA-DIRECTED RNA POLYMERASE"/>
    <property type="match status" value="1"/>
</dbReference>
<dbReference type="PANTHER" id="PTHR19376:SF54">
    <property type="entry name" value="DNA-DIRECTED RNA POLYMERASE SUBUNIT BETA"/>
    <property type="match status" value="1"/>
</dbReference>
<dbReference type="Pfam" id="PF04997">
    <property type="entry name" value="RNA_pol_Rpb1_1"/>
    <property type="match status" value="1"/>
</dbReference>
<dbReference type="Pfam" id="PF00623">
    <property type="entry name" value="RNA_pol_Rpb1_2"/>
    <property type="match status" value="1"/>
</dbReference>
<dbReference type="Pfam" id="PF04983">
    <property type="entry name" value="RNA_pol_Rpb1_3"/>
    <property type="match status" value="1"/>
</dbReference>
<dbReference type="Pfam" id="PF05000">
    <property type="entry name" value="RNA_pol_Rpb1_4"/>
    <property type="match status" value="1"/>
</dbReference>
<dbReference type="Pfam" id="PF04998">
    <property type="entry name" value="RNA_pol_Rpb1_5"/>
    <property type="match status" value="1"/>
</dbReference>
<dbReference type="SMART" id="SM00663">
    <property type="entry name" value="RPOLA_N"/>
    <property type="match status" value="1"/>
</dbReference>
<dbReference type="SUPFAM" id="SSF64484">
    <property type="entry name" value="beta and beta-prime subunits of DNA dependent RNA-polymerase"/>
    <property type="match status" value="1"/>
</dbReference>
<feature type="chain" id="PRO_0000308818" description="DNA-directed RNA polymerase subunit beta'">
    <location>
        <begin position="1"/>
        <end position="1299"/>
    </location>
</feature>
<feature type="binding site" evidence="1">
    <location>
        <position position="60"/>
    </location>
    <ligand>
        <name>Zn(2+)</name>
        <dbReference type="ChEBI" id="CHEBI:29105"/>
        <label>1</label>
    </ligand>
</feature>
<feature type="binding site" evidence="1">
    <location>
        <position position="62"/>
    </location>
    <ligand>
        <name>Zn(2+)</name>
        <dbReference type="ChEBI" id="CHEBI:29105"/>
        <label>1</label>
    </ligand>
</feature>
<feature type="binding site" evidence="1">
    <location>
        <position position="75"/>
    </location>
    <ligand>
        <name>Zn(2+)</name>
        <dbReference type="ChEBI" id="CHEBI:29105"/>
        <label>1</label>
    </ligand>
</feature>
<feature type="binding site" evidence="1">
    <location>
        <position position="78"/>
    </location>
    <ligand>
        <name>Zn(2+)</name>
        <dbReference type="ChEBI" id="CHEBI:29105"/>
        <label>1</label>
    </ligand>
</feature>
<feature type="binding site" evidence="1">
    <location>
        <position position="535"/>
    </location>
    <ligand>
        <name>Mg(2+)</name>
        <dbReference type="ChEBI" id="CHEBI:18420"/>
    </ligand>
</feature>
<feature type="binding site" evidence="1">
    <location>
        <position position="537"/>
    </location>
    <ligand>
        <name>Mg(2+)</name>
        <dbReference type="ChEBI" id="CHEBI:18420"/>
    </ligand>
</feature>
<feature type="binding site" evidence="1">
    <location>
        <position position="539"/>
    </location>
    <ligand>
        <name>Mg(2+)</name>
        <dbReference type="ChEBI" id="CHEBI:18420"/>
    </ligand>
</feature>
<feature type="binding site" evidence="1">
    <location>
        <position position="877"/>
    </location>
    <ligand>
        <name>Zn(2+)</name>
        <dbReference type="ChEBI" id="CHEBI:29105"/>
        <label>2</label>
    </ligand>
</feature>
<feature type="binding site" evidence="1">
    <location>
        <position position="954"/>
    </location>
    <ligand>
        <name>Zn(2+)</name>
        <dbReference type="ChEBI" id="CHEBI:29105"/>
        <label>2</label>
    </ligand>
</feature>
<feature type="binding site" evidence="1">
    <location>
        <position position="961"/>
    </location>
    <ligand>
        <name>Zn(2+)</name>
        <dbReference type="ChEBI" id="CHEBI:29105"/>
        <label>2</label>
    </ligand>
</feature>
<feature type="binding site" evidence="1">
    <location>
        <position position="964"/>
    </location>
    <ligand>
        <name>Zn(2+)</name>
        <dbReference type="ChEBI" id="CHEBI:29105"/>
        <label>2</label>
    </ligand>
</feature>
<comment type="function">
    <text evidence="1">DNA-dependent RNA polymerase catalyzes the transcription of DNA into RNA using the four ribonucleoside triphosphates as substrates.</text>
</comment>
<comment type="catalytic activity">
    <reaction evidence="1">
        <text>RNA(n) + a ribonucleoside 5'-triphosphate = RNA(n+1) + diphosphate</text>
        <dbReference type="Rhea" id="RHEA:21248"/>
        <dbReference type="Rhea" id="RHEA-COMP:14527"/>
        <dbReference type="Rhea" id="RHEA-COMP:17342"/>
        <dbReference type="ChEBI" id="CHEBI:33019"/>
        <dbReference type="ChEBI" id="CHEBI:61557"/>
        <dbReference type="ChEBI" id="CHEBI:140395"/>
        <dbReference type="EC" id="2.7.7.6"/>
    </reaction>
</comment>
<comment type="cofactor">
    <cofactor evidence="1">
        <name>Mg(2+)</name>
        <dbReference type="ChEBI" id="CHEBI:18420"/>
    </cofactor>
    <text evidence="1">Binds 1 Mg(2+) ion per subunit.</text>
</comment>
<comment type="cofactor">
    <cofactor evidence="1">
        <name>Zn(2+)</name>
        <dbReference type="ChEBI" id="CHEBI:29105"/>
    </cofactor>
    <text evidence="1">Binds 2 Zn(2+) ions per subunit.</text>
</comment>
<comment type="subunit">
    <text evidence="1">The RNAP catalytic core consists of 2 alpha, 1 beta, 1 beta' and 1 omega subunit. When a sigma factor is associated with the core the holoenzyme is formed, which can initiate transcription.</text>
</comment>
<comment type="similarity">
    <text evidence="1">Belongs to the RNA polymerase beta' chain family.</text>
</comment>
<protein>
    <recommendedName>
        <fullName evidence="1">DNA-directed RNA polymerase subunit beta'</fullName>
        <shortName evidence="1">RNAP subunit beta'</shortName>
        <ecNumber evidence="1">2.7.7.6</ecNumber>
    </recommendedName>
    <alternativeName>
        <fullName evidence="1">RNA polymerase subunit beta'</fullName>
    </alternativeName>
    <alternativeName>
        <fullName evidence="1">Transcriptase subunit beta'</fullName>
    </alternativeName>
</protein>
<proteinExistence type="inferred from homology"/>
<accession>A1R8V3</accession>
<organism>
    <name type="scientific">Paenarthrobacter aurescens (strain TC1)</name>
    <dbReference type="NCBI Taxonomy" id="290340"/>
    <lineage>
        <taxon>Bacteria</taxon>
        <taxon>Bacillati</taxon>
        <taxon>Actinomycetota</taxon>
        <taxon>Actinomycetes</taxon>
        <taxon>Micrococcales</taxon>
        <taxon>Micrococcaceae</taxon>
        <taxon>Paenarthrobacter</taxon>
    </lineage>
</organism>
<evidence type="ECO:0000255" key="1">
    <source>
        <dbReference type="HAMAP-Rule" id="MF_01322"/>
    </source>
</evidence>
<reference key="1">
    <citation type="journal article" date="2006" name="PLoS Genet.">
        <title>Secrets of soil survival revealed by the genome sequence of Arthrobacter aurescens TC1.</title>
        <authorList>
            <person name="Mongodin E.F."/>
            <person name="Shapir N."/>
            <person name="Daugherty S.C."/>
            <person name="DeBoy R.T."/>
            <person name="Emerson J.B."/>
            <person name="Shvartzbeyn A."/>
            <person name="Radune D."/>
            <person name="Vamathevan J."/>
            <person name="Riggs F."/>
            <person name="Grinberg V."/>
            <person name="Khouri H.M."/>
            <person name="Wackett L.P."/>
            <person name="Nelson K.E."/>
            <person name="Sadowsky M.J."/>
        </authorList>
    </citation>
    <scope>NUCLEOTIDE SEQUENCE [LARGE SCALE GENOMIC DNA]</scope>
    <source>
        <strain>TC1</strain>
    </source>
</reference>
<gene>
    <name evidence="1" type="primary">rpoC</name>
    <name type="ordered locus">AAur_2956</name>
</gene>